<protein>
    <recommendedName>
        <fullName>Imidazole glycerol phosphate synthase subunit HisF</fullName>
        <ecNumber>4.3.2.10</ecNumber>
    </recommendedName>
    <alternativeName>
        <fullName>IGP synthase cyclase subunit</fullName>
    </alternativeName>
    <alternativeName>
        <fullName>IGP synthase subunit HisF</fullName>
    </alternativeName>
    <alternativeName>
        <fullName>ImGP synthase subunit HisF</fullName>
        <shortName>IGPS subunit HisF</shortName>
    </alternativeName>
</protein>
<keyword id="KW-0028">Amino-acid biosynthesis</keyword>
<keyword id="KW-0963">Cytoplasm</keyword>
<keyword id="KW-0368">Histidine biosynthesis</keyword>
<keyword id="KW-0456">Lyase</keyword>
<keyword id="KW-1185">Reference proteome</keyword>
<name>HIS6_DEIRA</name>
<accession>Q9RWD7</accession>
<feature type="chain" id="PRO_0000142153" description="Imidazole glycerol phosphate synthase subunit HisF">
    <location>
        <begin position="1"/>
        <end position="261"/>
    </location>
</feature>
<feature type="active site" evidence="2">
    <location>
        <position position="11"/>
    </location>
</feature>
<feature type="active site" evidence="2">
    <location>
        <position position="131"/>
    </location>
</feature>
<sequence length="261" mass="27780">MLAKRIVPCLDVQNGRVVKNVRFFEDHRDAGDPLVLAQAYEAQQADELVFYDITATHEGRSLMLDVAARVAEQVMMPLTVGGGVGALSDFRQLLLAGADKISVNSGAVKRPELIREASDHYGAQCVMLSIDAKRRPGGQGWTVHIGGGRVDTGLDLLAWARRGQELGAGELCLNVMDADGTRAGFDLEATRAVAREVDLPVIASGGAGKVQDFYDVLTAGEADAALAASVFHFGELTVPQVKTSLAAQGVPVRPEWRGATE</sequence>
<dbReference type="EC" id="4.3.2.10"/>
<dbReference type="EMBL" id="AE000513">
    <property type="protein sequence ID" value="AAF10311.1"/>
    <property type="status" value="ALT_INIT"/>
    <property type="molecule type" value="Genomic_DNA"/>
</dbReference>
<dbReference type="PIR" id="C75482">
    <property type="entry name" value="C75482"/>
</dbReference>
<dbReference type="RefSeq" id="NP_294455.1">
    <property type="nucleotide sequence ID" value="NC_001263.1"/>
</dbReference>
<dbReference type="RefSeq" id="WP_027480000.1">
    <property type="nucleotide sequence ID" value="NC_001263.1"/>
</dbReference>
<dbReference type="SMR" id="Q9RWD7"/>
<dbReference type="FunCoup" id="Q9RWD7">
    <property type="interactions" value="457"/>
</dbReference>
<dbReference type="STRING" id="243230.DR_0732"/>
<dbReference type="PaxDb" id="243230-DR_0732"/>
<dbReference type="EnsemblBacteria" id="AAF10311">
    <property type="protein sequence ID" value="AAF10311"/>
    <property type="gene ID" value="DR_0732"/>
</dbReference>
<dbReference type="GeneID" id="69516978"/>
<dbReference type="KEGG" id="dra:DR_0732"/>
<dbReference type="PATRIC" id="fig|243230.17.peg.910"/>
<dbReference type="eggNOG" id="COG0107">
    <property type="taxonomic scope" value="Bacteria"/>
</dbReference>
<dbReference type="HOGENOM" id="CLU_048577_4_0_0"/>
<dbReference type="InParanoid" id="Q9RWD7"/>
<dbReference type="OrthoDB" id="9781903at2"/>
<dbReference type="UniPathway" id="UPA00031">
    <property type="reaction ID" value="UER00010"/>
</dbReference>
<dbReference type="Proteomes" id="UP000002524">
    <property type="component" value="Chromosome 1"/>
</dbReference>
<dbReference type="GO" id="GO:0005737">
    <property type="term" value="C:cytoplasm"/>
    <property type="evidence" value="ECO:0007669"/>
    <property type="project" value="UniProtKB-SubCell"/>
</dbReference>
<dbReference type="GO" id="GO:0000107">
    <property type="term" value="F:imidazoleglycerol-phosphate synthase activity"/>
    <property type="evidence" value="ECO:0000318"/>
    <property type="project" value="GO_Central"/>
</dbReference>
<dbReference type="GO" id="GO:0016829">
    <property type="term" value="F:lyase activity"/>
    <property type="evidence" value="ECO:0007669"/>
    <property type="project" value="UniProtKB-KW"/>
</dbReference>
<dbReference type="GO" id="GO:0000105">
    <property type="term" value="P:L-histidine biosynthetic process"/>
    <property type="evidence" value="ECO:0007669"/>
    <property type="project" value="UniProtKB-UniRule"/>
</dbReference>
<dbReference type="CDD" id="cd04731">
    <property type="entry name" value="HisF"/>
    <property type="match status" value="1"/>
</dbReference>
<dbReference type="FunFam" id="3.20.20.70:FF:000006">
    <property type="entry name" value="Imidazole glycerol phosphate synthase subunit HisF"/>
    <property type="match status" value="1"/>
</dbReference>
<dbReference type="Gene3D" id="3.20.20.70">
    <property type="entry name" value="Aldolase class I"/>
    <property type="match status" value="1"/>
</dbReference>
<dbReference type="HAMAP" id="MF_01013">
    <property type="entry name" value="HisF"/>
    <property type="match status" value="1"/>
</dbReference>
<dbReference type="InterPro" id="IPR013785">
    <property type="entry name" value="Aldolase_TIM"/>
</dbReference>
<dbReference type="InterPro" id="IPR006062">
    <property type="entry name" value="His_biosynth"/>
</dbReference>
<dbReference type="InterPro" id="IPR004651">
    <property type="entry name" value="HisF"/>
</dbReference>
<dbReference type="InterPro" id="IPR050064">
    <property type="entry name" value="IGPS_HisA/HisF"/>
</dbReference>
<dbReference type="InterPro" id="IPR011060">
    <property type="entry name" value="RibuloseP-bd_barrel"/>
</dbReference>
<dbReference type="NCBIfam" id="TIGR00735">
    <property type="entry name" value="hisF"/>
    <property type="match status" value="1"/>
</dbReference>
<dbReference type="PANTHER" id="PTHR21235:SF2">
    <property type="entry name" value="IMIDAZOLE GLYCEROL PHOSPHATE SYNTHASE HISHF"/>
    <property type="match status" value="1"/>
</dbReference>
<dbReference type="PANTHER" id="PTHR21235">
    <property type="entry name" value="IMIDAZOLE GLYCEROL PHOSPHATE SYNTHASE SUBUNIT HISF/H IGP SYNTHASE SUBUNIT HISF/H"/>
    <property type="match status" value="1"/>
</dbReference>
<dbReference type="Pfam" id="PF00977">
    <property type="entry name" value="His_biosynth"/>
    <property type="match status" value="1"/>
</dbReference>
<dbReference type="SUPFAM" id="SSF51366">
    <property type="entry name" value="Ribulose-phoshate binding barrel"/>
    <property type="match status" value="1"/>
</dbReference>
<evidence type="ECO:0000250" key="1"/>
<evidence type="ECO:0000255" key="2"/>
<evidence type="ECO:0000305" key="3"/>
<proteinExistence type="inferred from homology"/>
<gene>
    <name type="primary">hisF</name>
    <name type="ordered locus">DR_0732</name>
</gene>
<reference key="1">
    <citation type="journal article" date="1999" name="Science">
        <title>Genome sequence of the radioresistant bacterium Deinococcus radiodurans R1.</title>
        <authorList>
            <person name="White O."/>
            <person name="Eisen J.A."/>
            <person name="Heidelberg J.F."/>
            <person name="Hickey E.K."/>
            <person name="Peterson J.D."/>
            <person name="Dodson R.J."/>
            <person name="Haft D.H."/>
            <person name="Gwinn M.L."/>
            <person name="Nelson W.C."/>
            <person name="Richardson D.L."/>
            <person name="Moffat K.S."/>
            <person name="Qin H."/>
            <person name="Jiang L."/>
            <person name="Pamphile W."/>
            <person name="Crosby M."/>
            <person name="Shen M."/>
            <person name="Vamathevan J.J."/>
            <person name="Lam P."/>
            <person name="McDonald L.A."/>
            <person name="Utterback T.R."/>
            <person name="Zalewski C."/>
            <person name="Makarova K.S."/>
            <person name="Aravind L."/>
            <person name="Daly M.J."/>
            <person name="Minton K.W."/>
            <person name="Fleischmann R.D."/>
            <person name="Ketchum K.A."/>
            <person name="Nelson K.E."/>
            <person name="Salzberg S.L."/>
            <person name="Smith H.O."/>
            <person name="Venter J.C."/>
            <person name="Fraser C.M."/>
        </authorList>
    </citation>
    <scope>NUCLEOTIDE SEQUENCE [LARGE SCALE GENOMIC DNA]</scope>
    <source>
        <strain>ATCC 13939 / DSM 20539 / JCM 16871 / CCUG 27074 / LMG 4051 / NBRC 15346 / NCIMB 9279 / VKM B-1422 / R1</strain>
    </source>
</reference>
<organism>
    <name type="scientific">Deinococcus radiodurans (strain ATCC 13939 / DSM 20539 / JCM 16871 / CCUG 27074 / LMG 4051 / NBRC 15346 / NCIMB 9279 / VKM B-1422 / R1)</name>
    <dbReference type="NCBI Taxonomy" id="243230"/>
    <lineage>
        <taxon>Bacteria</taxon>
        <taxon>Thermotogati</taxon>
        <taxon>Deinococcota</taxon>
        <taxon>Deinococci</taxon>
        <taxon>Deinococcales</taxon>
        <taxon>Deinococcaceae</taxon>
        <taxon>Deinococcus</taxon>
    </lineage>
</organism>
<comment type="function">
    <text evidence="1">IGPS catalyzes the conversion of PRFAR and glutamine to IGP, AICAR and glutamate. The HisF subunit catalyzes the cyclization activity that produces IGP and AICAR from PRFAR using the ammonia provided by the HisH subunit (By similarity).</text>
</comment>
<comment type="catalytic activity">
    <reaction>
        <text>5-[(5-phospho-1-deoxy-D-ribulos-1-ylimino)methylamino]-1-(5-phospho-beta-D-ribosyl)imidazole-4-carboxamide + L-glutamine = D-erythro-1-(imidazol-4-yl)glycerol 3-phosphate + 5-amino-1-(5-phospho-beta-D-ribosyl)imidazole-4-carboxamide + L-glutamate + H(+)</text>
        <dbReference type="Rhea" id="RHEA:24793"/>
        <dbReference type="ChEBI" id="CHEBI:15378"/>
        <dbReference type="ChEBI" id="CHEBI:29985"/>
        <dbReference type="ChEBI" id="CHEBI:58278"/>
        <dbReference type="ChEBI" id="CHEBI:58359"/>
        <dbReference type="ChEBI" id="CHEBI:58475"/>
        <dbReference type="ChEBI" id="CHEBI:58525"/>
        <dbReference type="EC" id="4.3.2.10"/>
    </reaction>
</comment>
<comment type="pathway">
    <text>Amino-acid biosynthesis; L-histidine biosynthesis; L-histidine from 5-phospho-alpha-D-ribose 1-diphosphate: step 5/9.</text>
</comment>
<comment type="subunit">
    <text evidence="1">Heterodimer of HisH and HisF.</text>
</comment>
<comment type="subcellular location">
    <subcellularLocation>
        <location evidence="1">Cytoplasm</location>
    </subcellularLocation>
</comment>
<comment type="similarity">
    <text evidence="3">Belongs to the HisA/HisF family.</text>
</comment>
<comment type="sequence caution" evidence="3">
    <conflict type="erroneous initiation">
        <sequence resource="EMBL-CDS" id="AAF10311"/>
    </conflict>
</comment>